<keyword id="KW-0106">Calcium</keyword>
<keyword id="KW-0186">Copper</keyword>
<keyword id="KW-0249">Electron transport</keyword>
<keyword id="KW-0349">Heme</keyword>
<keyword id="KW-0408">Iron</keyword>
<keyword id="KW-0460">Magnesium</keyword>
<keyword id="KW-0472">Membrane</keyword>
<keyword id="KW-0479">Metal-binding</keyword>
<keyword id="KW-0496">Mitochondrion</keyword>
<keyword id="KW-0999">Mitochondrion inner membrane</keyword>
<keyword id="KW-1185">Reference proteome</keyword>
<keyword id="KW-0679">Respiratory chain</keyword>
<keyword id="KW-1278">Translocase</keyword>
<keyword id="KW-0812">Transmembrane</keyword>
<keyword id="KW-1133">Transmembrane helix</keyword>
<keyword id="KW-0813">Transport</keyword>
<protein>
    <recommendedName>
        <fullName>Cytochrome c oxidase subunit 1</fullName>
        <ecNumber>7.1.1.9</ecNumber>
    </recommendedName>
    <alternativeName>
        <fullName>Cytochrome c oxidase polypeptide I</fullName>
    </alternativeName>
</protein>
<sequence length="511" mass="56361">PRQWLFSTNHKDIGTLYFIFGAWAGMVGTSLSILIRAELGHPGALIGDDQIYNVIVTAHAFIMIFFMVMPIMIGGFGNWLVPLMLGAPDMAFPRMNNMSFWLLPPALSLLLVSSMVENGAGTGWTVYPPLSAGIAHGGASVDLAIFSLHLAGISSILGAVNFITTVINMRSTGISLDRMPLFVWSVVITALLLLLSLPVLAGAITMLLTDRNLNTSFFDPAGGGDPILYQHLFWFFGHPEVYILILPGFGMISHIISQESGKKETFGSLGMIYAMLAIGLLGFIVWAHHMFTVGMDVDTRAYFTSATMIIAVPTGIKIFSWLATLHGTQLSYSPAILWALGFVFLFTVGGLTGVVLANSSVDIILHDTYYVVAHFHYVLSMGAVFAIMAGFIHWYPLFTGLTLNNKWLKSQFITMFIGVNLTFFPQHFLGLAGMPRRYSDYPDAYTTWNIVSTIGSTISLLGILFFFFIIWESLVSQRQVIYPIQLNSSIEWYQNTPPAEHSYSELPLLTN</sequence>
<organism>
    <name type="scientific">Drosophila sechellia</name>
    <name type="common">Fruit fly</name>
    <dbReference type="NCBI Taxonomy" id="7238"/>
    <lineage>
        <taxon>Eukaryota</taxon>
        <taxon>Metazoa</taxon>
        <taxon>Ecdysozoa</taxon>
        <taxon>Arthropoda</taxon>
        <taxon>Hexapoda</taxon>
        <taxon>Insecta</taxon>
        <taxon>Pterygota</taxon>
        <taxon>Neoptera</taxon>
        <taxon>Endopterygota</taxon>
        <taxon>Diptera</taxon>
        <taxon>Brachycera</taxon>
        <taxon>Muscomorpha</taxon>
        <taxon>Ephydroidea</taxon>
        <taxon>Drosophilidae</taxon>
        <taxon>Drosophila</taxon>
        <taxon>Sophophora</taxon>
    </lineage>
</organism>
<gene>
    <name type="primary">mt:CoI</name>
    <name type="synonym">CoI</name>
</gene>
<feature type="chain" id="PRO_0000183327" description="Cytochrome c oxidase subunit 1">
    <location>
        <begin position="1"/>
        <end position="511"/>
    </location>
</feature>
<feature type="transmembrane region" description="Helical" evidence="3">
    <location>
        <begin position="15"/>
        <end position="35"/>
    </location>
</feature>
<feature type="transmembrane region" description="Helical" evidence="3">
    <location>
        <begin position="54"/>
        <end position="74"/>
    </location>
</feature>
<feature type="transmembrane region" description="Helical" evidence="3">
    <location>
        <begin position="100"/>
        <end position="120"/>
    </location>
</feature>
<feature type="transmembrane region" description="Helical" evidence="3">
    <location>
        <begin position="143"/>
        <end position="163"/>
    </location>
</feature>
<feature type="transmembrane region" description="Helical" evidence="3">
    <location>
        <begin position="181"/>
        <end position="201"/>
    </location>
</feature>
<feature type="transmembrane region" description="Helical" evidence="3">
    <location>
        <begin position="232"/>
        <end position="252"/>
    </location>
</feature>
<feature type="transmembrane region" description="Helical" evidence="3">
    <location>
        <begin position="266"/>
        <end position="286"/>
    </location>
</feature>
<feature type="transmembrane region" description="Helical" evidence="3">
    <location>
        <begin position="303"/>
        <end position="323"/>
    </location>
</feature>
<feature type="transmembrane region" description="Helical" evidence="3">
    <location>
        <begin position="336"/>
        <end position="356"/>
    </location>
</feature>
<feature type="transmembrane region" description="Helical" evidence="3">
    <location>
        <begin position="378"/>
        <end position="398"/>
    </location>
</feature>
<feature type="transmembrane region" description="Helical" evidence="3">
    <location>
        <begin position="412"/>
        <end position="432"/>
    </location>
</feature>
<feature type="transmembrane region" description="Helical" evidence="3">
    <location>
        <begin position="450"/>
        <end position="470"/>
    </location>
</feature>
<feature type="binding site" evidence="2">
    <location>
        <position position="38"/>
    </location>
    <ligand>
        <name>Ca(2+)</name>
        <dbReference type="ChEBI" id="CHEBI:29108"/>
    </ligand>
</feature>
<feature type="binding site" evidence="2">
    <location>
        <position position="43"/>
    </location>
    <ligand>
        <name>Ca(2+)</name>
        <dbReference type="ChEBI" id="CHEBI:29108"/>
    </ligand>
</feature>
<feature type="binding site" description="axial binding residue" evidence="2">
    <location>
        <position position="59"/>
    </location>
    <ligand>
        <name>Fe(II)-heme a</name>
        <dbReference type="ChEBI" id="CHEBI:61715"/>
        <note>low-spin</note>
    </ligand>
    <ligandPart>
        <name>Fe</name>
        <dbReference type="ChEBI" id="CHEBI:18248"/>
    </ligandPart>
</feature>
<feature type="binding site" evidence="2">
    <location>
        <position position="238"/>
    </location>
    <ligand>
        <name>Cu cation</name>
        <dbReference type="ChEBI" id="CHEBI:23378"/>
        <label>B</label>
    </ligand>
</feature>
<feature type="binding site" evidence="1">
    <location>
        <position position="242"/>
    </location>
    <ligand>
        <name>O2</name>
        <dbReference type="ChEBI" id="CHEBI:15379"/>
    </ligand>
</feature>
<feature type="binding site" evidence="2">
    <location>
        <position position="288"/>
    </location>
    <ligand>
        <name>Cu cation</name>
        <dbReference type="ChEBI" id="CHEBI:23378"/>
        <label>B</label>
    </ligand>
</feature>
<feature type="binding site" evidence="2">
    <location>
        <position position="289"/>
    </location>
    <ligand>
        <name>Cu cation</name>
        <dbReference type="ChEBI" id="CHEBI:23378"/>
        <label>B</label>
    </ligand>
</feature>
<feature type="binding site" evidence="2">
    <location>
        <position position="366"/>
    </location>
    <ligand>
        <name>Mg(2+)</name>
        <dbReference type="ChEBI" id="CHEBI:18420"/>
        <note>ligand shared with subunit 2</note>
    </ligand>
</feature>
<feature type="binding site" evidence="2">
    <location>
        <position position="367"/>
    </location>
    <ligand>
        <name>Mg(2+)</name>
        <dbReference type="ChEBI" id="CHEBI:18420"/>
        <note>ligand shared with subunit 2</note>
    </ligand>
</feature>
<feature type="binding site" description="axial binding residue" evidence="2">
    <location>
        <position position="374"/>
    </location>
    <ligand>
        <name>heme a3</name>
        <dbReference type="ChEBI" id="CHEBI:83282"/>
        <note>high-spin</note>
    </ligand>
    <ligandPart>
        <name>Fe</name>
        <dbReference type="ChEBI" id="CHEBI:18248"/>
    </ligandPart>
</feature>
<feature type="binding site" description="axial binding residue" evidence="2">
    <location>
        <position position="376"/>
    </location>
    <ligand>
        <name>Fe(II)-heme a</name>
        <dbReference type="ChEBI" id="CHEBI:61715"/>
        <note>low-spin</note>
    </ligand>
    <ligandPart>
        <name>Fe</name>
        <dbReference type="ChEBI" id="CHEBI:18248"/>
    </ligandPart>
</feature>
<feature type="cross-link" description="1'-histidyl-3'-tyrosine (His-Tyr)" evidence="2">
    <location>
        <begin position="238"/>
        <end position="242"/>
    </location>
</feature>
<reference key="1">
    <citation type="journal article" date="1990" name="Proc. Natl. Acad. Sci. U.S.A.">
        <title>Evolution of Drosophila mitochondrial DNA and the history of the melanogaster subgroup.</title>
        <authorList>
            <person name="Satta Y."/>
            <person name="Takahata N."/>
        </authorList>
    </citation>
    <scope>NUCLEOTIDE SEQUENCE [GENOMIC DNA]</scope>
    <source>
        <strain>SS78</strain>
    </source>
</reference>
<reference key="2">
    <citation type="journal article" date="2000" name="J. Mol. Evol.">
        <title>Comparative genomics of mitochondrial DNA in members of the Drosophila melanogaster subgroup.</title>
        <authorList>
            <person name="Ballard J.W.O."/>
        </authorList>
    </citation>
    <scope>NUCLEOTIDE SEQUENCE [LARGE SCALE GENOMIC DNA]</scope>
    <source>
        <strain evidence="5">Rob3c / Tucson 14021-0248.25</strain>
    </source>
</reference>
<reference key="3">
    <citation type="journal article" date="2009" name="J. Mol. Evol.">
        <title>Comparative genomics of Drosophila mtDNA: Novel features of conservation and change across functional domains and lineages.</title>
        <authorList>
            <person name="Montooth K.L."/>
            <person name="Abt D.N."/>
            <person name="Hofmann J.W."/>
            <person name="Rand D.M."/>
        </authorList>
    </citation>
    <scope>IDENTIFICATION OF PROBABLE INITIATION SITE</scope>
</reference>
<dbReference type="EC" id="7.1.1.9"/>
<dbReference type="EMBL" id="M57908">
    <property type="protein sequence ID" value="AAB02286.1"/>
    <property type="molecule type" value="Genomic_DNA"/>
</dbReference>
<dbReference type="EMBL" id="AF200832">
    <property type="protein sequence ID" value="AAF77290.1"/>
    <property type="molecule type" value="Genomic_DNA"/>
</dbReference>
<dbReference type="SMR" id="Q34391"/>
<dbReference type="STRING" id="7238.Q34391"/>
<dbReference type="KEGG" id="dse:2760948"/>
<dbReference type="CTD" id="4512"/>
<dbReference type="UniPathway" id="UPA00705"/>
<dbReference type="ChiTaRS" id="COX1">
    <property type="organism name" value="fly"/>
</dbReference>
<dbReference type="Proteomes" id="UP000001292">
    <property type="component" value="Mitochondrion"/>
</dbReference>
<dbReference type="GO" id="GO:0005743">
    <property type="term" value="C:mitochondrial inner membrane"/>
    <property type="evidence" value="ECO:0007669"/>
    <property type="project" value="UniProtKB-SubCell"/>
</dbReference>
<dbReference type="GO" id="GO:0045277">
    <property type="term" value="C:respiratory chain complex IV"/>
    <property type="evidence" value="ECO:0007669"/>
    <property type="project" value="InterPro"/>
</dbReference>
<dbReference type="GO" id="GO:0004129">
    <property type="term" value="F:cytochrome-c oxidase activity"/>
    <property type="evidence" value="ECO:0007669"/>
    <property type="project" value="UniProtKB-EC"/>
</dbReference>
<dbReference type="GO" id="GO:0020037">
    <property type="term" value="F:heme binding"/>
    <property type="evidence" value="ECO:0007669"/>
    <property type="project" value="InterPro"/>
</dbReference>
<dbReference type="GO" id="GO:0046872">
    <property type="term" value="F:metal ion binding"/>
    <property type="evidence" value="ECO:0007669"/>
    <property type="project" value="UniProtKB-KW"/>
</dbReference>
<dbReference type="GO" id="GO:0015990">
    <property type="term" value="P:electron transport coupled proton transport"/>
    <property type="evidence" value="ECO:0007669"/>
    <property type="project" value="TreeGrafter"/>
</dbReference>
<dbReference type="GO" id="GO:0006123">
    <property type="term" value="P:mitochondrial electron transport, cytochrome c to oxygen"/>
    <property type="evidence" value="ECO:0007669"/>
    <property type="project" value="TreeGrafter"/>
</dbReference>
<dbReference type="CDD" id="cd01663">
    <property type="entry name" value="Cyt_c_Oxidase_I"/>
    <property type="match status" value="1"/>
</dbReference>
<dbReference type="FunFam" id="1.20.210.10:FF:000001">
    <property type="entry name" value="Cytochrome c oxidase subunit 1"/>
    <property type="match status" value="1"/>
</dbReference>
<dbReference type="Gene3D" id="1.20.210.10">
    <property type="entry name" value="Cytochrome c oxidase-like, subunit I domain"/>
    <property type="match status" value="1"/>
</dbReference>
<dbReference type="InterPro" id="IPR023616">
    <property type="entry name" value="Cyt_c_oxase-like_su1_dom"/>
</dbReference>
<dbReference type="InterPro" id="IPR036927">
    <property type="entry name" value="Cyt_c_oxase-like_su1_sf"/>
</dbReference>
<dbReference type="InterPro" id="IPR000883">
    <property type="entry name" value="Cyt_C_Oxase_1"/>
</dbReference>
<dbReference type="InterPro" id="IPR023615">
    <property type="entry name" value="Cyt_c_Oxase_su1_BS"/>
</dbReference>
<dbReference type="InterPro" id="IPR033944">
    <property type="entry name" value="Cyt_c_oxase_su1_dom"/>
</dbReference>
<dbReference type="PANTHER" id="PTHR10422">
    <property type="entry name" value="CYTOCHROME C OXIDASE SUBUNIT 1"/>
    <property type="match status" value="1"/>
</dbReference>
<dbReference type="PANTHER" id="PTHR10422:SF18">
    <property type="entry name" value="CYTOCHROME C OXIDASE SUBUNIT 1"/>
    <property type="match status" value="1"/>
</dbReference>
<dbReference type="Pfam" id="PF00115">
    <property type="entry name" value="COX1"/>
    <property type="match status" value="1"/>
</dbReference>
<dbReference type="PRINTS" id="PR01165">
    <property type="entry name" value="CYCOXIDASEI"/>
</dbReference>
<dbReference type="SUPFAM" id="SSF81442">
    <property type="entry name" value="Cytochrome c oxidase subunit I-like"/>
    <property type="match status" value="1"/>
</dbReference>
<dbReference type="PROSITE" id="PS50855">
    <property type="entry name" value="COX1"/>
    <property type="match status" value="1"/>
</dbReference>
<dbReference type="PROSITE" id="PS00077">
    <property type="entry name" value="COX1_CUB"/>
    <property type="match status" value="1"/>
</dbReference>
<accession>Q34391</accession>
<accession>Q9MGM2</accession>
<comment type="function">
    <text evidence="2">Component of the cytochrome c oxidase, the last enzyme in the mitochondrial electron transport chain which drives oxidative phosphorylation. The respiratory chain contains 3 multisubunit complexes succinate dehydrogenase (complex II, CII), ubiquinol-cytochrome c oxidoreductase (cytochrome b-c1 complex, complex III, CIII) and cytochrome c oxidase (complex IV, CIV), that cooperate to transfer electrons derived from NADH and succinate to molecular oxygen, creating an electrochemical gradient over the inner membrane that drives transmembrane transport and the ATP synthase. Cytochrome c oxidase is the component of the respiratory chain that catalyzes the reduction of oxygen to water. Electrons originating from reduced cytochrome c in the intermembrane space (IMS) are transferred via the dinuclear copper A center (CU(A)) of subunit 2 and heme A of subunit 1 to the active site in subunit 1, a binuclear center (BNC) formed by heme A3 and copper B (CU(B)). The BNC reduces molecular oxygen to 2 water molecules using 4 electrons from cytochrome c in the IMS and 4 protons from the mitochondrial matrix.</text>
</comment>
<comment type="catalytic activity">
    <reaction evidence="2">
        <text>4 Fe(II)-[cytochrome c] + O2 + 8 H(+)(in) = 4 Fe(III)-[cytochrome c] + 2 H2O + 4 H(+)(out)</text>
        <dbReference type="Rhea" id="RHEA:11436"/>
        <dbReference type="Rhea" id="RHEA-COMP:10350"/>
        <dbReference type="Rhea" id="RHEA-COMP:14399"/>
        <dbReference type="ChEBI" id="CHEBI:15377"/>
        <dbReference type="ChEBI" id="CHEBI:15378"/>
        <dbReference type="ChEBI" id="CHEBI:15379"/>
        <dbReference type="ChEBI" id="CHEBI:29033"/>
        <dbReference type="ChEBI" id="CHEBI:29034"/>
        <dbReference type="EC" id="7.1.1.9"/>
    </reaction>
    <physiologicalReaction direction="left-to-right" evidence="2">
        <dbReference type="Rhea" id="RHEA:11437"/>
    </physiologicalReaction>
</comment>
<comment type="cofactor">
    <cofactor evidence="2">
        <name>heme</name>
        <dbReference type="ChEBI" id="CHEBI:30413"/>
    </cofactor>
    <text evidence="2">Binds 2 heme A groups non-covalently per subunit.</text>
</comment>
<comment type="cofactor">
    <cofactor evidence="2">
        <name>Cu cation</name>
        <dbReference type="ChEBI" id="CHEBI:23378"/>
    </cofactor>
    <text evidence="2">Binds a copper B center.</text>
</comment>
<comment type="pathway">
    <text evidence="2">Energy metabolism; oxidative phosphorylation.</text>
</comment>
<comment type="subunit">
    <text evidence="2">Component of the cytochrome c oxidase (complex IV, CIV), a multisubunit enzyme composed of a catalytic core of 3 subunits and several supernumerary subunits. The complex exists as a monomer or a dimer and forms supercomplexes (SCs) in the inner mitochondrial membrane with ubiquinol-cytochrome c oxidoreductase (cytochrome b-c1 complex, complex III, CIII).</text>
</comment>
<comment type="subcellular location">
    <subcellularLocation>
        <location evidence="2">Mitochondrion inner membrane</location>
        <topology evidence="2">Multi-pass membrane protein</topology>
    </subcellularLocation>
</comment>
<comment type="similarity">
    <text evidence="4">Belongs to the heme-copper respiratory oxidase family.</text>
</comment>
<comment type="caution">
    <text evidence="4">There is no mitochondrial-type translation initiation codon present in frame in the sequence. In PubMed:19533212, the authors suggest the presence of a novel start codon coding for either Pro or Ser in Drosophila CoI transcripts.</text>
</comment>
<geneLocation type="mitochondrion"/>
<evidence type="ECO:0000250" key="1">
    <source>
        <dbReference type="UniProtKB" id="P00396"/>
    </source>
</evidence>
<evidence type="ECO:0000250" key="2">
    <source>
        <dbReference type="UniProtKB" id="P00401"/>
    </source>
</evidence>
<evidence type="ECO:0000255" key="3"/>
<evidence type="ECO:0000305" key="4"/>
<evidence type="ECO:0000312" key="5">
    <source>
        <dbReference type="Proteomes" id="UP000001292"/>
    </source>
</evidence>
<name>COX1_DROSE</name>
<proteinExistence type="inferred from homology"/>